<organism>
    <name type="scientific">Geobacillus kaustophilus (strain HTA426)</name>
    <dbReference type="NCBI Taxonomy" id="235909"/>
    <lineage>
        <taxon>Bacteria</taxon>
        <taxon>Bacillati</taxon>
        <taxon>Bacillota</taxon>
        <taxon>Bacilli</taxon>
        <taxon>Bacillales</taxon>
        <taxon>Anoxybacillaceae</taxon>
        <taxon>Geobacillus</taxon>
        <taxon>Geobacillus thermoleovorans group</taxon>
    </lineage>
</organism>
<accession>Q5L325</accession>
<name>THIC_GEOKA</name>
<keyword id="KW-0004">4Fe-4S</keyword>
<keyword id="KW-0408">Iron</keyword>
<keyword id="KW-0411">Iron-sulfur</keyword>
<keyword id="KW-0456">Lyase</keyword>
<keyword id="KW-0479">Metal-binding</keyword>
<keyword id="KW-1185">Reference proteome</keyword>
<keyword id="KW-0949">S-adenosyl-L-methionine</keyword>
<keyword id="KW-0784">Thiamine biosynthesis</keyword>
<keyword id="KW-0862">Zinc</keyword>
<feature type="chain" id="PRO_0000242264" description="Phosphomethylpyrimidine synthase">
    <location>
        <begin position="1"/>
        <end position="562"/>
    </location>
</feature>
<feature type="binding site" evidence="1">
    <location>
        <position position="179"/>
    </location>
    <ligand>
        <name>substrate</name>
    </ligand>
</feature>
<feature type="binding site" evidence="1">
    <location>
        <position position="208"/>
    </location>
    <ligand>
        <name>substrate</name>
    </ligand>
</feature>
<feature type="binding site" evidence="1">
    <location>
        <position position="237"/>
    </location>
    <ligand>
        <name>substrate</name>
    </ligand>
</feature>
<feature type="binding site" evidence="1">
    <location>
        <position position="273"/>
    </location>
    <ligand>
        <name>substrate</name>
    </ligand>
</feature>
<feature type="binding site" evidence="1">
    <location>
        <begin position="293"/>
        <end position="295"/>
    </location>
    <ligand>
        <name>substrate</name>
    </ligand>
</feature>
<feature type="binding site" evidence="1">
    <location>
        <begin position="334"/>
        <end position="337"/>
    </location>
    <ligand>
        <name>substrate</name>
    </ligand>
</feature>
<feature type="binding site" evidence="1">
    <location>
        <position position="373"/>
    </location>
    <ligand>
        <name>substrate</name>
    </ligand>
</feature>
<feature type="binding site" evidence="1">
    <location>
        <position position="377"/>
    </location>
    <ligand>
        <name>Zn(2+)</name>
        <dbReference type="ChEBI" id="CHEBI:29105"/>
    </ligand>
</feature>
<feature type="binding site" evidence="1">
    <location>
        <position position="400"/>
    </location>
    <ligand>
        <name>substrate</name>
    </ligand>
</feature>
<feature type="binding site" evidence="1">
    <location>
        <position position="441"/>
    </location>
    <ligand>
        <name>Zn(2+)</name>
        <dbReference type="ChEBI" id="CHEBI:29105"/>
    </ligand>
</feature>
<feature type="binding site" evidence="1">
    <location>
        <position position="521"/>
    </location>
    <ligand>
        <name>[4Fe-4S] cluster</name>
        <dbReference type="ChEBI" id="CHEBI:49883"/>
        <note>4Fe-4S-S-AdoMet</note>
    </ligand>
</feature>
<feature type="binding site" evidence="1">
    <location>
        <position position="524"/>
    </location>
    <ligand>
        <name>[4Fe-4S] cluster</name>
        <dbReference type="ChEBI" id="CHEBI:49883"/>
        <note>4Fe-4S-S-AdoMet</note>
    </ligand>
</feature>
<feature type="binding site" evidence="1">
    <location>
        <position position="529"/>
    </location>
    <ligand>
        <name>[4Fe-4S] cluster</name>
        <dbReference type="ChEBI" id="CHEBI:49883"/>
        <note>4Fe-4S-S-AdoMet</note>
    </ligand>
</feature>
<comment type="function">
    <text evidence="1">Catalyzes the synthesis of the hydroxymethylpyrimidine phosphate (HMP-P) moiety of thiamine from aminoimidazole ribotide (AIR) in a radical S-adenosyl-L-methionine (SAM)-dependent reaction.</text>
</comment>
<comment type="catalytic activity">
    <reaction evidence="1">
        <text>5-amino-1-(5-phospho-beta-D-ribosyl)imidazole + S-adenosyl-L-methionine = 4-amino-2-methyl-5-(phosphooxymethyl)pyrimidine + CO + 5'-deoxyadenosine + formate + L-methionine + 3 H(+)</text>
        <dbReference type="Rhea" id="RHEA:24840"/>
        <dbReference type="ChEBI" id="CHEBI:15378"/>
        <dbReference type="ChEBI" id="CHEBI:15740"/>
        <dbReference type="ChEBI" id="CHEBI:17245"/>
        <dbReference type="ChEBI" id="CHEBI:17319"/>
        <dbReference type="ChEBI" id="CHEBI:57844"/>
        <dbReference type="ChEBI" id="CHEBI:58354"/>
        <dbReference type="ChEBI" id="CHEBI:59789"/>
        <dbReference type="ChEBI" id="CHEBI:137981"/>
        <dbReference type="EC" id="4.1.99.17"/>
    </reaction>
</comment>
<comment type="cofactor">
    <cofactor evidence="1">
        <name>[4Fe-4S] cluster</name>
        <dbReference type="ChEBI" id="CHEBI:49883"/>
    </cofactor>
    <text evidence="1">Binds 1 [4Fe-4S] cluster per subunit. The cluster is coordinated with 3 cysteines and an exchangeable S-adenosyl-L-methionine.</text>
</comment>
<comment type="pathway">
    <text evidence="1">Cofactor biosynthesis; thiamine diphosphate biosynthesis.</text>
</comment>
<comment type="similarity">
    <text evidence="1">Belongs to the ThiC family.</text>
</comment>
<proteinExistence type="inferred from homology"/>
<evidence type="ECO:0000255" key="1">
    <source>
        <dbReference type="HAMAP-Rule" id="MF_00089"/>
    </source>
</evidence>
<gene>
    <name evidence="1" type="primary">thiC</name>
    <name type="ordered locus">GK0370</name>
</gene>
<dbReference type="EC" id="4.1.99.17" evidence="1"/>
<dbReference type="EMBL" id="BA000043">
    <property type="protein sequence ID" value="BAD74655.1"/>
    <property type="molecule type" value="Genomic_DNA"/>
</dbReference>
<dbReference type="RefSeq" id="WP_011229874.1">
    <property type="nucleotide sequence ID" value="NC_006510.1"/>
</dbReference>
<dbReference type="SMR" id="Q5L325"/>
<dbReference type="STRING" id="235909.GK0370"/>
<dbReference type="GeneID" id="32062343"/>
<dbReference type="KEGG" id="gka:GK0370"/>
<dbReference type="eggNOG" id="COG0422">
    <property type="taxonomic scope" value="Bacteria"/>
</dbReference>
<dbReference type="HOGENOM" id="CLU_013181_2_1_9"/>
<dbReference type="UniPathway" id="UPA00060"/>
<dbReference type="Proteomes" id="UP000001172">
    <property type="component" value="Chromosome"/>
</dbReference>
<dbReference type="GO" id="GO:0005829">
    <property type="term" value="C:cytosol"/>
    <property type="evidence" value="ECO:0007669"/>
    <property type="project" value="TreeGrafter"/>
</dbReference>
<dbReference type="GO" id="GO:0051539">
    <property type="term" value="F:4 iron, 4 sulfur cluster binding"/>
    <property type="evidence" value="ECO:0007669"/>
    <property type="project" value="UniProtKB-KW"/>
</dbReference>
<dbReference type="GO" id="GO:0016830">
    <property type="term" value="F:carbon-carbon lyase activity"/>
    <property type="evidence" value="ECO:0007669"/>
    <property type="project" value="InterPro"/>
</dbReference>
<dbReference type="GO" id="GO:0008270">
    <property type="term" value="F:zinc ion binding"/>
    <property type="evidence" value="ECO:0007669"/>
    <property type="project" value="UniProtKB-UniRule"/>
</dbReference>
<dbReference type="GO" id="GO:0009228">
    <property type="term" value="P:thiamine biosynthetic process"/>
    <property type="evidence" value="ECO:0007669"/>
    <property type="project" value="UniProtKB-KW"/>
</dbReference>
<dbReference type="GO" id="GO:0009229">
    <property type="term" value="P:thiamine diphosphate biosynthetic process"/>
    <property type="evidence" value="ECO:0007669"/>
    <property type="project" value="UniProtKB-UniRule"/>
</dbReference>
<dbReference type="FunFam" id="3.20.20.540:FF:000001">
    <property type="entry name" value="Phosphomethylpyrimidine synthase"/>
    <property type="match status" value="1"/>
</dbReference>
<dbReference type="Gene3D" id="6.10.250.620">
    <property type="match status" value="1"/>
</dbReference>
<dbReference type="Gene3D" id="3.20.20.540">
    <property type="entry name" value="Radical SAM ThiC family, central domain"/>
    <property type="match status" value="1"/>
</dbReference>
<dbReference type="HAMAP" id="MF_00089">
    <property type="entry name" value="ThiC"/>
    <property type="match status" value="1"/>
</dbReference>
<dbReference type="InterPro" id="IPR037509">
    <property type="entry name" value="ThiC"/>
</dbReference>
<dbReference type="InterPro" id="IPR025747">
    <property type="entry name" value="ThiC-associated_dom"/>
</dbReference>
<dbReference type="InterPro" id="IPR038521">
    <property type="entry name" value="ThiC/Bza_core_dom"/>
</dbReference>
<dbReference type="InterPro" id="IPR002817">
    <property type="entry name" value="ThiC/BzaA/B"/>
</dbReference>
<dbReference type="NCBIfam" id="NF006763">
    <property type="entry name" value="PRK09284.1"/>
    <property type="match status" value="1"/>
</dbReference>
<dbReference type="NCBIfam" id="NF009895">
    <property type="entry name" value="PRK13352.1"/>
    <property type="match status" value="1"/>
</dbReference>
<dbReference type="NCBIfam" id="TIGR00190">
    <property type="entry name" value="thiC"/>
    <property type="match status" value="1"/>
</dbReference>
<dbReference type="PANTHER" id="PTHR30557:SF1">
    <property type="entry name" value="PHOSPHOMETHYLPYRIMIDINE SYNTHASE, CHLOROPLASTIC"/>
    <property type="match status" value="1"/>
</dbReference>
<dbReference type="PANTHER" id="PTHR30557">
    <property type="entry name" value="THIAMINE BIOSYNTHESIS PROTEIN THIC"/>
    <property type="match status" value="1"/>
</dbReference>
<dbReference type="Pfam" id="PF13667">
    <property type="entry name" value="ThiC-associated"/>
    <property type="match status" value="1"/>
</dbReference>
<dbReference type="Pfam" id="PF01964">
    <property type="entry name" value="ThiC_Rad_SAM"/>
    <property type="match status" value="1"/>
</dbReference>
<dbReference type="SFLD" id="SFLDF00407">
    <property type="entry name" value="phosphomethylpyrimidine_syntha"/>
    <property type="match status" value="1"/>
</dbReference>
<dbReference type="SFLD" id="SFLDG01114">
    <property type="entry name" value="phosphomethylpyrimidine_syntha"/>
    <property type="match status" value="1"/>
</dbReference>
<dbReference type="SFLD" id="SFLDS00113">
    <property type="entry name" value="Radical_SAM_Phosphomethylpyrim"/>
    <property type="match status" value="1"/>
</dbReference>
<reference key="1">
    <citation type="journal article" date="2004" name="Nucleic Acids Res.">
        <title>Thermoadaptation trait revealed by the genome sequence of thermophilic Geobacillus kaustophilus.</title>
        <authorList>
            <person name="Takami H."/>
            <person name="Takaki Y."/>
            <person name="Chee G.-J."/>
            <person name="Nishi S."/>
            <person name="Shimamura S."/>
            <person name="Suzuki H."/>
            <person name="Matsui S."/>
            <person name="Uchiyama I."/>
        </authorList>
    </citation>
    <scope>NUCLEOTIDE SEQUENCE [LARGE SCALE GENOMIC DNA]</scope>
    <source>
        <strain>HTA426</strain>
    </source>
</reference>
<sequence length="562" mass="63253">MENIRSFMSFPESRKVYIEGSRPDVRVPMREIALSPTKTPQGMVENKPVRVYDTTGPYTDPDFEPDVEKGLPPLRRRWIVERGDVEEMERSSVAIQRSLPFVRRPLRAKPGKTVTQMHYAKRGIITPEMEFVAIREQIDPEIVRQEVAAGRAIIPANINHPESEPMIIGRRFHVKINANIGNSAVSSSIEDEVEKLLWAVRWGADTVMDLSTGKHIHETREYIIRNSPVPVGTVPIYQALEKVGGVPEKLTWDVYRETLIEQAEQGVDYMTIHAGVRLHYIPLTANRTTGIVSRGGSIIAQWCLAHHEENFLYTHFEEICEILKQYDVAISLGDGLRPGSIADANDEAQFAELKTLGELTKIAWKHDVQVMIEGPGHIPMHKIRENVEREQEICHGAPFYTLGPLVTDIAPGYDHITSAIGAAIIGAYGTAMLCYVTPKEHLGLPNKEDVRAGVVAYKIAAHAADLAKGHPAAQQRDDALSKARFEFRWNDQFNLSLDPERAREYHDETLPAEAAKTAHFCSMCGPKFCSMNISHELQRKIKEEGMKEKAQQFIRQGSSLYQ</sequence>
<protein>
    <recommendedName>
        <fullName evidence="1">Phosphomethylpyrimidine synthase</fullName>
        <ecNumber evidence="1">4.1.99.17</ecNumber>
    </recommendedName>
    <alternativeName>
        <fullName evidence="1">Hydroxymethylpyrimidine phosphate synthase</fullName>
        <shortName evidence="1">HMP-P synthase</shortName>
        <shortName evidence="1">HMP-phosphate synthase</shortName>
        <shortName evidence="1">HMPP synthase</shortName>
    </alternativeName>
    <alternativeName>
        <fullName evidence="1">Thiamine biosynthesis protein ThiC</fullName>
    </alternativeName>
</protein>